<comment type="function">
    <text evidence="1">One of the primary rRNA binding proteins, it binds directly to 16S rRNA where it nucleates assembly of the head domain of the 30S subunit. Is located at the subunit interface close to the decoding center, probably blocks exit of the E-site tRNA.</text>
</comment>
<comment type="subunit">
    <text evidence="1">Part of the 30S ribosomal subunit. Contacts proteins S9 and S11.</text>
</comment>
<comment type="similarity">
    <text evidence="1">Belongs to the universal ribosomal protein uS7 family.</text>
</comment>
<evidence type="ECO:0000255" key="1">
    <source>
        <dbReference type="HAMAP-Rule" id="MF_00480"/>
    </source>
</evidence>
<evidence type="ECO:0000305" key="2"/>
<keyword id="KW-0687">Ribonucleoprotein</keyword>
<keyword id="KW-0689">Ribosomal protein</keyword>
<keyword id="KW-0694">RNA-binding</keyword>
<keyword id="KW-0699">rRNA-binding</keyword>
<keyword id="KW-0820">tRNA-binding</keyword>
<feature type="chain" id="PRO_1000014146" description="Small ribosomal subunit protein uS7">
    <location>
        <begin position="1"/>
        <end position="156"/>
    </location>
</feature>
<gene>
    <name evidence="1" type="primary">rpsG</name>
    <name type="ordered locus">RBAM_001360</name>
</gene>
<proteinExistence type="inferred from homology"/>
<dbReference type="EMBL" id="CP000560">
    <property type="protein sequence ID" value="ABS72559.1"/>
    <property type="molecule type" value="Genomic_DNA"/>
</dbReference>
<dbReference type="RefSeq" id="WP_003156447.1">
    <property type="nucleotide sequence ID" value="NC_009725.2"/>
</dbReference>
<dbReference type="SMR" id="A7Z0N3"/>
<dbReference type="GeneID" id="93079275"/>
<dbReference type="KEGG" id="bay:RBAM_001360"/>
<dbReference type="HOGENOM" id="CLU_072226_1_1_9"/>
<dbReference type="Proteomes" id="UP000001120">
    <property type="component" value="Chromosome"/>
</dbReference>
<dbReference type="GO" id="GO:0015935">
    <property type="term" value="C:small ribosomal subunit"/>
    <property type="evidence" value="ECO:0007669"/>
    <property type="project" value="InterPro"/>
</dbReference>
<dbReference type="GO" id="GO:0019843">
    <property type="term" value="F:rRNA binding"/>
    <property type="evidence" value="ECO:0007669"/>
    <property type="project" value="UniProtKB-UniRule"/>
</dbReference>
<dbReference type="GO" id="GO:0003735">
    <property type="term" value="F:structural constituent of ribosome"/>
    <property type="evidence" value="ECO:0007669"/>
    <property type="project" value="InterPro"/>
</dbReference>
<dbReference type="GO" id="GO:0000049">
    <property type="term" value="F:tRNA binding"/>
    <property type="evidence" value="ECO:0007669"/>
    <property type="project" value="UniProtKB-UniRule"/>
</dbReference>
<dbReference type="GO" id="GO:0006412">
    <property type="term" value="P:translation"/>
    <property type="evidence" value="ECO:0007669"/>
    <property type="project" value="UniProtKB-UniRule"/>
</dbReference>
<dbReference type="CDD" id="cd14869">
    <property type="entry name" value="uS7_Bacteria"/>
    <property type="match status" value="1"/>
</dbReference>
<dbReference type="FunFam" id="1.10.455.10:FF:000001">
    <property type="entry name" value="30S ribosomal protein S7"/>
    <property type="match status" value="1"/>
</dbReference>
<dbReference type="Gene3D" id="1.10.455.10">
    <property type="entry name" value="Ribosomal protein S7 domain"/>
    <property type="match status" value="1"/>
</dbReference>
<dbReference type="HAMAP" id="MF_00480_B">
    <property type="entry name" value="Ribosomal_uS7_B"/>
    <property type="match status" value="1"/>
</dbReference>
<dbReference type="InterPro" id="IPR000235">
    <property type="entry name" value="Ribosomal_uS7"/>
</dbReference>
<dbReference type="InterPro" id="IPR005717">
    <property type="entry name" value="Ribosomal_uS7_bac/org-type"/>
</dbReference>
<dbReference type="InterPro" id="IPR020606">
    <property type="entry name" value="Ribosomal_uS7_CS"/>
</dbReference>
<dbReference type="InterPro" id="IPR023798">
    <property type="entry name" value="Ribosomal_uS7_dom"/>
</dbReference>
<dbReference type="InterPro" id="IPR036823">
    <property type="entry name" value="Ribosomal_uS7_dom_sf"/>
</dbReference>
<dbReference type="NCBIfam" id="TIGR01029">
    <property type="entry name" value="rpsG_bact"/>
    <property type="match status" value="1"/>
</dbReference>
<dbReference type="PANTHER" id="PTHR11205">
    <property type="entry name" value="RIBOSOMAL PROTEIN S7"/>
    <property type="match status" value="1"/>
</dbReference>
<dbReference type="Pfam" id="PF00177">
    <property type="entry name" value="Ribosomal_S7"/>
    <property type="match status" value="1"/>
</dbReference>
<dbReference type="PIRSF" id="PIRSF002122">
    <property type="entry name" value="RPS7p_RPS7a_RPS5e_RPS7o"/>
    <property type="match status" value="1"/>
</dbReference>
<dbReference type="SUPFAM" id="SSF47973">
    <property type="entry name" value="Ribosomal protein S7"/>
    <property type="match status" value="1"/>
</dbReference>
<dbReference type="PROSITE" id="PS00052">
    <property type="entry name" value="RIBOSOMAL_S7"/>
    <property type="match status" value="1"/>
</dbReference>
<organism>
    <name type="scientific">Bacillus velezensis (strain DSM 23117 / BGSC 10A6 / LMG 26770 / FZB42)</name>
    <name type="common">Bacillus amyloliquefaciens subsp. plantarum</name>
    <dbReference type="NCBI Taxonomy" id="326423"/>
    <lineage>
        <taxon>Bacteria</taxon>
        <taxon>Bacillati</taxon>
        <taxon>Bacillota</taxon>
        <taxon>Bacilli</taxon>
        <taxon>Bacillales</taxon>
        <taxon>Bacillaceae</taxon>
        <taxon>Bacillus</taxon>
        <taxon>Bacillus amyloliquefaciens group</taxon>
    </lineage>
</organism>
<accession>A7Z0N3</accession>
<reference key="1">
    <citation type="journal article" date="2007" name="Nat. Biotechnol.">
        <title>Comparative analysis of the complete genome sequence of the plant growth-promoting bacterium Bacillus amyloliquefaciens FZB42.</title>
        <authorList>
            <person name="Chen X.H."/>
            <person name="Koumoutsi A."/>
            <person name="Scholz R."/>
            <person name="Eisenreich A."/>
            <person name="Schneider K."/>
            <person name="Heinemeyer I."/>
            <person name="Morgenstern B."/>
            <person name="Voss B."/>
            <person name="Hess W.R."/>
            <person name="Reva O."/>
            <person name="Junge H."/>
            <person name="Voigt B."/>
            <person name="Jungblut P.R."/>
            <person name="Vater J."/>
            <person name="Suessmuth R."/>
            <person name="Liesegang H."/>
            <person name="Strittmatter A."/>
            <person name="Gottschalk G."/>
            <person name="Borriss R."/>
        </authorList>
    </citation>
    <scope>NUCLEOTIDE SEQUENCE [LARGE SCALE GENOMIC DNA]</scope>
    <source>
        <strain>DSM 23117 / BGSC 10A6 / LMG 26770 / FZB42</strain>
    </source>
</reference>
<sequence length="156" mass="17883">MPRKGPVAKRDVLPDPLYNSKLVSRLINKMMIDGKKGKSQTILYKSFDIIKERTGNDAMEVFEQALKNIMPVLEVKARRVGGANYQVPVEVRPERRTTLGLRWLVNYARLRGEKTMEERLANEILDAANNTGAAVKKREDTHKMAEANKAFAHYRW</sequence>
<name>RS7_BACVZ</name>
<protein>
    <recommendedName>
        <fullName evidence="1">Small ribosomal subunit protein uS7</fullName>
    </recommendedName>
    <alternativeName>
        <fullName evidence="2">30S ribosomal protein S7</fullName>
    </alternativeName>
</protein>